<reference key="1">
    <citation type="journal article" date="2009" name="PLoS Genet.">
        <title>Organised genome dynamics in the Escherichia coli species results in highly diverse adaptive paths.</title>
        <authorList>
            <person name="Touchon M."/>
            <person name="Hoede C."/>
            <person name="Tenaillon O."/>
            <person name="Barbe V."/>
            <person name="Baeriswyl S."/>
            <person name="Bidet P."/>
            <person name="Bingen E."/>
            <person name="Bonacorsi S."/>
            <person name="Bouchier C."/>
            <person name="Bouvet O."/>
            <person name="Calteau A."/>
            <person name="Chiapello H."/>
            <person name="Clermont O."/>
            <person name="Cruveiller S."/>
            <person name="Danchin A."/>
            <person name="Diard M."/>
            <person name="Dossat C."/>
            <person name="Karoui M.E."/>
            <person name="Frapy E."/>
            <person name="Garry L."/>
            <person name="Ghigo J.M."/>
            <person name="Gilles A.M."/>
            <person name="Johnson J."/>
            <person name="Le Bouguenec C."/>
            <person name="Lescat M."/>
            <person name="Mangenot S."/>
            <person name="Martinez-Jehanne V."/>
            <person name="Matic I."/>
            <person name="Nassif X."/>
            <person name="Oztas S."/>
            <person name="Petit M.A."/>
            <person name="Pichon C."/>
            <person name="Rouy Z."/>
            <person name="Ruf C.S."/>
            <person name="Schneider D."/>
            <person name="Tourret J."/>
            <person name="Vacherie B."/>
            <person name="Vallenet D."/>
            <person name="Medigue C."/>
            <person name="Rocha E.P.C."/>
            <person name="Denamur E."/>
        </authorList>
    </citation>
    <scope>NUCLEOTIDE SEQUENCE [LARGE SCALE GENOMIC DNA]</scope>
    <source>
        <strain>55989 / EAEC</strain>
    </source>
</reference>
<sequence>MWIGIISLFPEMFRAITDYGVTGRAVKNGLLSIQSWSPRDFTHDRHRTVDDRPYGGGPGMLMMVQPLRDAIHAAKAAAGEGAKVIYLSPQGRKLDQAGVSELATNQKLILVCGRYEGIDERVIQTEIDEEWSIGDYVLSGGELPAMTLIDSVSRFIPGVLGHEASATEDSFAEGLLDCPHYTRPEVLEGMEVPPVLLSGNHAEIRRWRLKQSLGRTWLRRPELLENLALTEEQARLLAEFKTEHAQQQHKHDGMA</sequence>
<feature type="chain" id="PRO_1000198569" description="tRNA (guanine-N(1)-)-methyltransferase">
    <location>
        <begin position="1"/>
        <end position="255"/>
    </location>
</feature>
<feature type="binding site" evidence="1">
    <location>
        <position position="113"/>
    </location>
    <ligand>
        <name>S-adenosyl-L-methionine</name>
        <dbReference type="ChEBI" id="CHEBI:59789"/>
    </ligand>
</feature>
<feature type="binding site" evidence="1">
    <location>
        <begin position="133"/>
        <end position="138"/>
    </location>
    <ligand>
        <name>S-adenosyl-L-methionine</name>
        <dbReference type="ChEBI" id="CHEBI:59789"/>
    </ligand>
</feature>
<evidence type="ECO:0000255" key="1">
    <source>
        <dbReference type="HAMAP-Rule" id="MF_00605"/>
    </source>
</evidence>
<comment type="function">
    <text evidence="1">Specifically methylates guanosine-37 in various tRNAs.</text>
</comment>
<comment type="catalytic activity">
    <reaction evidence="1">
        <text>guanosine(37) in tRNA + S-adenosyl-L-methionine = N(1)-methylguanosine(37) in tRNA + S-adenosyl-L-homocysteine + H(+)</text>
        <dbReference type="Rhea" id="RHEA:36899"/>
        <dbReference type="Rhea" id="RHEA-COMP:10145"/>
        <dbReference type="Rhea" id="RHEA-COMP:10147"/>
        <dbReference type="ChEBI" id="CHEBI:15378"/>
        <dbReference type="ChEBI" id="CHEBI:57856"/>
        <dbReference type="ChEBI" id="CHEBI:59789"/>
        <dbReference type="ChEBI" id="CHEBI:73542"/>
        <dbReference type="ChEBI" id="CHEBI:74269"/>
        <dbReference type="EC" id="2.1.1.228"/>
    </reaction>
</comment>
<comment type="subunit">
    <text evidence="1">Homodimer.</text>
</comment>
<comment type="subcellular location">
    <subcellularLocation>
        <location evidence="1">Cytoplasm</location>
    </subcellularLocation>
</comment>
<comment type="similarity">
    <text evidence="1">Belongs to the RNA methyltransferase TrmD family.</text>
</comment>
<keyword id="KW-0963">Cytoplasm</keyword>
<keyword id="KW-0489">Methyltransferase</keyword>
<keyword id="KW-1185">Reference proteome</keyword>
<keyword id="KW-0949">S-adenosyl-L-methionine</keyword>
<keyword id="KW-0808">Transferase</keyword>
<keyword id="KW-0819">tRNA processing</keyword>
<gene>
    <name evidence="1" type="primary">trmD</name>
    <name type="ordered locus">EC55989_2896</name>
</gene>
<accession>B7LDJ6</accession>
<name>TRMD_ECO55</name>
<proteinExistence type="inferred from homology"/>
<protein>
    <recommendedName>
        <fullName evidence="1">tRNA (guanine-N(1)-)-methyltransferase</fullName>
        <ecNumber evidence="1">2.1.1.228</ecNumber>
    </recommendedName>
    <alternativeName>
        <fullName evidence="1">M1G-methyltransferase</fullName>
    </alternativeName>
    <alternativeName>
        <fullName evidence="1">tRNA [GM37] methyltransferase</fullName>
    </alternativeName>
</protein>
<organism>
    <name type="scientific">Escherichia coli (strain 55989 / EAEC)</name>
    <dbReference type="NCBI Taxonomy" id="585055"/>
    <lineage>
        <taxon>Bacteria</taxon>
        <taxon>Pseudomonadati</taxon>
        <taxon>Pseudomonadota</taxon>
        <taxon>Gammaproteobacteria</taxon>
        <taxon>Enterobacterales</taxon>
        <taxon>Enterobacteriaceae</taxon>
        <taxon>Escherichia</taxon>
    </lineage>
</organism>
<dbReference type="EC" id="2.1.1.228" evidence="1"/>
<dbReference type="EMBL" id="CU928145">
    <property type="protein sequence ID" value="CAU98763.1"/>
    <property type="molecule type" value="Genomic_DNA"/>
</dbReference>
<dbReference type="RefSeq" id="WP_000264777.1">
    <property type="nucleotide sequence ID" value="NC_011748.1"/>
</dbReference>
<dbReference type="SMR" id="B7LDJ6"/>
<dbReference type="GeneID" id="93774457"/>
<dbReference type="KEGG" id="eck:EC55989_2896"/>
<dbReference type="HOGENOM" id="CLU_047363_0_1_6"/>
<dbReference type="Proteomes" id="UP000000746">
    <property type="component" value="Chromosome"/>
</dbReference>
<dbReference type="GO" id="GO:0005829">
    <property type="term" value="C:cytosol"/>
    <property type="evidence" value="ECO:0007669"/>
    <property type="project" value="TreeGrafter"/>
</dbReference>
<dbReference type="GO" id="GO:0052906">
    <property type="term" value="F:tRNA (guanine(37)-N1)-methyltransferase activity"/>
    <property type="evidence" value="ECO:0007669"/>
    <property type="project" value="UniProtKB-UniRule"/>
</dbReference>
<dbReference type="GO" id="GO:0002939">
    <property type="term" value="P:tRNA N1-guanine methylation"/>
    <property type="evidence" value="ECO:0007669"/>
    <property type="project" value="TreeGrafter"/>
</dbReference>
<dbReference type="CDD" id="cd18080">
    <property type="entry name" value="TrmD-like"/>
    <property type="match status" value="1"/>
</dbReference>
<dbReference type="FunFam" id="1.10.1270.20:FF:000001">
    <property type="entry name" value="tRNA (guanine-N(1)-)-methyltransferase"/>
    <property type="match status" value="1"/>
</dbReference>
<dbReference type="FunFam" id="3.40.1280.10:FF:000001">
    <property type="entry name" value="tRNA (guanine-N(1)-)-methyltransferase"/>
    <property type="match status" value="1"/>
</dbReference>
<dbReference type="Gene3D" id="3.40.1280.10">
    <property type="match status" value="1"/>
</dbReference>
<dbReference type="Gene3D" id="1.10.1270.20">
    <property type="entry name" value="tRNA(m1g37)methyltransferase, domain 2"/>
    <property type="match status" value="1"/>
</dbReference>
<dbReference type="HAMAP" id="MF_00605">
    <property type="entry name" value="TrmD"/>
    <property type="match status" value="1"/>
</dbReference>
<dbReference type="InterPro" id="IPR029028">
    <property type="entry name" value="Alpha/beta_knot_MTases"/>
</dbReference>
<dbReference type="InterPro" id="IPR023148">
    <property type="entry name" value="tRNA_m1G_MeTrfase_C_sf"/>
</dbReference>
<dbReference type="InterPro" id="IPR002649">
    <property type="entry name" value="tRNA_m1G_MeTrfase_TrmD"/>
</dbReference>
<dbReference type="InterPro" id="IPR029026">
    <property type="entry name" value="tRNA_m1G_MTases_N"/>
</dbReference>
<dbReference type="InterPro" id="IPR016009">
    <property type="entry name" value="tRNA_MeTrfase_TRMD/TRM10"/>
</dbReference>
<dbReference type="NCBIfam" id="NF000648">
    <property type="entry name" value="PRK00026.1"/>
    <property type="match status" value="1"/>
</dbReference>
<dbReference type="NCBIfam" id="TIGR00088">
    <property type="entry name" value="trmD"/>
    <property type="match status" value="1"/>
</dbReference>
<dbReference type="PANTHER" id="PTHR46417">
    <property type="entry name" value="TRNA (GUANINE-N(1)-)-METHYLTRANSFERASE"/>
    <property type="match status" value="1"/>
</dbReference>
<dbReference type="PANTHER" id="PTHR46417:SF1">
    <property type="entry name" value="TRNA (GUANINE-N(1)-)-METHYLTRANSFERASE"/>
    <property type="match status" value="1"/>
</dbReference>
<dbReference type="Pfam" id="PF01746">
    <property type="entry name" value="tRNA_m1G_MT"/>
    <property type="match status" value="1"/>
</dbReference>
<dbReference type="PIRSF" id="PIRSF000386">
    <property type="entry name" value="tRNA_mtase"/>
    <property type="match status" value="1"/>
</dbReference>
<dbReference type="SUPFAM" id="SSF75217">
    <property type="entry name" value="alpha/beta knot"/>
    <property type="match status" value="1"/>
</dbReference>